<keyword id="KW-0028">Amino-acid biosynthesis</keyword>
<keyword id="KW-0057">Aromatic amino acid biosynthesis</keyword>
<keyword id="KW-0274">FAD</keyword>
<keyword id="KW-0285">Flavoprotein</keyword>
<keyword id="KW-0288">FMN</keyword>
<keyword id="KW-0456">Lyase</keyword>
<keyword id="KW-0521">NADP</keyword>
<keyword id="KW-1185">Reference proteome</keyword>
<evidence type="ECO:0000255" key="1">
    <source>
        <dbReference type="HAMAP-Rule" id="MF_00300"/>
    </source>
</evidence>
<accession>Q8P7R0</accession>
<dbReference type="EC" id="4.2.3.5" evidence="1"/>
<dbReference type="EMBL" id="AE008922">
    <property type="protein sequence ID" value="AAM41823.1"/>
    <property type="molecule type" value="Genomic_DNA"/>
</dbReference>
<dbReference type="RefSeq" id="NP_637899.1">
    <property type="nucleotide sequence ID" value="NC_003902.1"/>
</dbReference>
<dbReference type="RefSeq" id="WP_011037681.1">
    <property type="nucleotide sequence ID" value="NC_003902.1"/>
</dbReference>
<dbReference type="SMR" id="Q8P7R0"/>
<dbReference type="STRING" id="190485.XCC2551"/>
<dbReference type="EnsemblBacteria" id="AAM41823">
    <property type="protein sequence ID" value="AAM41823"/>
    <property type="gene ID" value="XCC2551"/>
</dbReference>
<dbReference type="KEGG" id="xcc:XCC2551"/>
<dbReference type="PATRIC" id="fig|190485.4.peg.2718"/>
<dbReference type="eggNOG" id="COG0082">
    <property type="taxonomic scope" value="Bacteria"/>
</dbReference>
<dbReference type="HOGENOM" id="CLU_034547_0_2_6"/>
<dbReference type="OrthoDB" id="9771806at2"/>
<dbReference type="UniPathway" id="UPA00053">
    <property type="reaction ID" value="UER00090"/>
</dbReference>
<dbReference type="Proteomes" id="UP000001010">
    <property type="component" value="Chromosome"/>
</dbReference>
<dbReference type="GO" id="GO:0005829">
    <property type="term" value="C:cytosol"/>
    <property type="evidence" value="ECO:0000318"/>
    <property type="project" value="GO_Central"/>
</dbReference>
<dbReference type="GO" id="GO:0004107">
    <property type="term" value="F:chorismate synthase activity"/>
    <property type="evidence" value="ECO:0000318"/>
    <property type="project" value="GO_Central"/>
</dbReference>
<dbReference type="GO" id="GO:0010181">
    <property type="term" value="F:FMN binding"/>
    <property type="evidence" value="ECO:0000318"/>
    <property type="project" value="GO_Central"/>
</dbReference>
<dbReference type="GO" id="GO:0008652">
    <property type="term" value="P:amino acid biosynthetic process"/>
    <property type="evidence" value="ECO:0007669"/>
    <property type="project" value="UniProtKB-KW"/>
</dbReference>
<dbReference type="GO" id="GO:0009073">
    <property type="term" value="P:aromatic amino acid family biosynthetic process"/>
    <property type="evidence" value="ECO:0000318"/>
    <property type="project" value="GO_Central"/>
</dbReference>
<dbReference type="GO" id="GO:0009423">
    <property type="term" value="P:chorismate biosynthetic process"/>
    <property type="evidence" value="ECO:0000318"/>
    <property type="project" value="GO_Central"/>
</dbReference>
<dbReference type="CDD" id="cd07304">
    <property type="entry name" value="Chorismate_synthase"/>
    <property type="match status" value="1"/>
</dbReference>
<dbReference type="FunFam" id="3.60.150.10:FF:000001">
    <property type="entry name" value="Chorismate synthase"/>
    <property type="match status" value="1"/>
</dbReference>
<dbReference type="Gene3D" id="3.60.150.10">
    <property type="entry name" value="Chorismate synthase AroC"/>
    <property type="match status" value="1"/>
</dbReference>
<dbReference type="HAMAP" id="MF_00300">
    <property type="entry name" value="Chorismate_synth"/>
    <property type="match status" value="1"/>
</dbReference>
<dbReference type="InterPro" id="IPR000453">
    <property type="entry name" value="Chorismate_synth"/>
</dbReference>
<dbReference type="InterPro" id="IPR035904">
    <property type="entry name" value="Chorismate_synth_AroC_sf"/>
</dbReference>
<dbReference type="InterPro" id="IPR020541">
    <property type="entry name" value="Chorismate_synthase_CS"/>
</dbReference>
<dbReference type="NCBIfam" id="TIGR00033">
    <property type="entry name" value="aroC"/>
    <property type="match status" value="1"/>
</dbReference>
<dbReference type="NCBIfam" id="NF003793">
    <property type="entry name" value="PRK05382.1"/>
    <property type="match status" value="1"/>
</dbReference>
<dbReference type="PANTHER" id="PTHR21085">
    <property type="entry name" value="CHORISMATE SYNTHASE"/>
    <property type="match status" value="1"/>
</dbReference>
<dbReference type="PANTHER" id="PTHR21085:SF0">
    <property type="entry name" value="CHORISMATE SYNTHASE"/>
    <property type="match status" value="1"/>
</dbReference>
<dbReference type="Pfam" id="PF01264">
    <property type="entry name" value="Chorismate_synt"/>
    <property type="match status" value="1"/>
</dbReference>
<dbReference type="PIRSF" id="PIRSF001456">
    <property type="entry name" value="Chorismate_synth"/>
    <property type="match status" value="1"/>
</dbReference>
<dbReference type="SUPFAM" id="SSF103263">
    <property type="entry name" value="Chorismate synthase, AroC"/>
    <property type="match status" value="1"/>
</dbReference>
<dbReference type="PROSITE" id="PS00787">
    <property type="entry name" value="CHORISMATE_SYNTHASE_1"/>
    <property type="match status" value="1"/>
</dbReference>
<dbReference type="PROSITE" id="PS00788">
    <property type="entry name" value="CHORISMATE_SYNTHASE_2"/>
    <property type="match status" value="1"/>
</dbReference>
<dbReference type="PROSITE" id="PS00789">
    <property type="entry name" value="CHORISMATE_SYNTHASE_3"/>
    <property type="match status" value="1"/>
</dbReference>
<reference key="1">
    <citation type="journal article" date="2002" name="Nature">
        <title>Comparison of the genomes of two Xanthomonas pathogens with differing host specificities.</title>
        <authorList>
            <person name="da Silva A.C.R."/>
            <person name="Ferro J.A."/>
            <person name="Reinach F.C."/>
            <person name="Farah C.S."/>
            <person name="Furlan L.R."/>
            <person name="Quaggio R.B."/>
            <person name="Monteiro-Vitorello C.B."/>
            <person name="Van Sluys M.A."/>
            <person name="Almeida N.F. Jr."/>
            <person name="Alves L.M.C."/>
            <person name="do Amaral A.M."/>
            <person name="Bertolini M.C."/>
            <person name="Camargo L.E.A."/>
            <person name="Camarotte G."/>
            <person name="Cannavan F."/>
            <person name="Cardozo J."/>
            <person name="Chambergo F."/>
            <person name="Ciapina L.P."/>
            <person name="Cicarelli R.M.B."/>
            <person name="Coutinho L.L."/>
            <person name="Cursino-Santos J.R."/>
            <person name="El-Dorry H."/>
            <person name="Faria J.B."/>
            <person name="Ferreira A.J.S."/>
            <person name="Ferreira R.C.C."/>
            <person name="Ferro M.I.T."/>
            <person name="Formighieri E.F."/>
            <person name="Franco M.C."/>
            <person name="Greggio C.C."/>
            <person name="Gruber A."/>
            <person name="Katsuyama A.M."/>
            <person name="Kishi L.T."/>
            <person name="Leite R.P."/>
            <person name="Lemos E.G.M."/>
            <person name="Lemos M.V.F."/>
            <person name="Locali E.C."/>
            <person name="Machado M.A."/>
            <person name="Madeira A.M.B.N."/>
            <person name="Martinez-Rossi N.M."/>
            <person name="Martins E.C."/>
            <person name="Meidanis J."/>
            <person name="Menck C.F.M."/>
            <person name="Miyaki C.Y."/>
            <person name="Moon D.H."/>
            <person name="Moreira L.M."/>
            <person name="Novo M.T.M."/>
            <person name="Okura V.K."/>
            <person name="Oliveira M.C."/>
            <person name="Oliveira V.R."/>
            <person name="Pereira H.A."/>
            <person name="Rossi A."/>
            <person name="Sena J.A.D."/>
            <person name="Silva C."/>
            <person name="de Souza R.F."/>
            <person name="Spinola L.A.F."/>
            <person name="Takita M.A."/>
            <person name="Tamura R.E."/>
            <person name="Teixeira E.C."/>
            <person name="Tezza R.I.D."/>
            <person name="Trindade dos Santos M."/>
            <person name="Truffi D."/>
            <person name="Tsai S.M."/>
            <person name="White F.F."/>
            <person name="Setubal J.C."/>
            <person name="Kitajima J.P."/>
        </authorList>
    </citation>
    <scope>NUCLEOTIDE SEQUENCE [LARGE SCALE GENOMIC DNA]</scope>
    <source>
        <strain>ATCC 33913 / DSM 3586 / NCPPB 528 / LMG 568 / P 25</strain>
    </source>
</reference>
<sequence>MGSNSFGRLFTVTTFGESHGPAIGCVIDGCPPGLEIAPEEFTHDLQRRATGKSRHTSARREADEIEILSGVYEGRTTGTPIGLLIRNTDQRSKDYTNIAQQFRPGHADYTYWQKYGIRDPRGGGRSSARETTMRVAAGVIAKKWLKQRYGVLVRGFLSQLGEIRPSGFDWDAVEDNPFFWPHAAQVPELETYMDALRKSGDSVGARVDVVAGGVPPGWGEPIYGKLDSELAAALMSINAVKGVEIGDGFASAAQKGTEHRDLITPEGFLSNHAGGILGGISTGQAVTASMVLKPTSSLRLPGATVDADGAVVDVITTGRHDPCVGIRATPIAEAMMALVLMDQALRHRAQCGDVGEVSPLIPGQADV</sequence>
<feature type="chain" id="PRO_0000140679" description="Chorismate synthase">
    <location>
        <begin position="1"/>
        <end position="367"/>
    </location>
</feature>
<feature type="binding site" evidence="1">
    <location>
        <position position="48"/>
    </location>
    <ligand>
        <name>NADP(+)</name>
        <dbReference type="ChEBI" id="CHEBI:58349"/>
    </ligand>
</feature>
<feature type="binding site" evidence="1">
    <location>
        <position position="54"/>
    </location>
    <ligand>
        <name>NADP(+)</name>
        <dbReference type="ChEBI" id="CHEBI:58349"/>
    </ligand>
</feature>
<feature type="binding site" evidence="1">
    <location>
        <begin position="125"/>
        <end position="127"/>
    </location>
    <ligand>
        <name>FMN</name>
        <dbReference type="ChEBI" id="CHEBI:58210"/>
    </ligand>
</feature>
<feature type="binding site" evidence="1">
    <location>
        <begin position="238"/>
        <end position="239"/>
    </location>
    <ligand>
        <name>FMN</name>
        <dbReference type="ChEBI" id="CHEBI:58210"/>
    </ligand>
</feature>
<feature type="binding site" evidence="1">
    <location>
        <position position="278"/>
    </location>
    <ligand>
        <name>FMN</name>
        <dbReference type="ChEBI" id="CHEBI:58210"/>
    </ligand>
</feature>
<feature type="binding site" evidence="1">
    <location>
        <begin position="293"/>
        <end position="297"/>
    </location>
    <ligand>
        <name>FMN</name>
        <dbReference type="ChEBI" id="CHEBI:58210"/>
    </ligand>
</feature>
<feature type="binding site" evidence="1">
    <location>
        <position position="319"/>
    </location>
    <ligand>
        <name>FMN</name>
        <dbReference type="ChEBI" id="CHEBI:58210"/>
    </ligand>
</feature>
<name>AROC_XANCP</name>
<gene>
    <name evidence="1" type="primary">aroC</name>
    <name type="ordered locus">XCC2551</name>
</gene>
<proteinExistence type="inferred from homology"/>
<protein>
    <recommendedName>
        <fullName evidence="1">Chorismate synthase</fullName>
        <shortName evidence="1">CS</shortName>
        <ecNumber evidence="1">4.2.3.5</ecNumber>
    </recommendedName>
    <alternativeName>
        <fullName evidence="1">5-enolpyruvylshikimate-3-phosphate phospholyase</fullName>
    </alternativeName>
</protein>
<organism>
    <name type="scientific">Xanthomonas campestris pv. campestris (strain ATCC 33913 / DSM 3586 / NCPPB 528 / LMG 568 / P 25)</name>
    <dbReference type="NCBI Taxonomy" id="190485"/>
    <lineage>
        <taxon>Bacteria</taxon>
        <taxon>Pseudomonadati</taxon>
        <taxon>Pseudomonadota</taxon>
        <taxon>Gammaproteobacteria</taxon>
        <taxon>Lysobacterales</taxon>
        <taxon>Lysobacteraceae</taxon>
        <taxon>Xanthomonas</taxon>
    </lineage>
</organism>
<comment type="function">
    <text evidence="1">Catalyzes the anti-1,4-elimination of the C-3 phosphate and the C-6 proR hydrogen from 5-enolpyruvylshikimate-3-phosphate (EPSP) to yield chorismate, which is the branch point compound that serves as the starting substrate for the three terminal pathways of aromatic amino acid biosynthesis. This reaction introduces a second double bond into the aromatic ring system.</text>
</comment>
<comment type="catalytic activity">
    <reaction evidence="1">
        <text>5-O-(1-carboxyvinyl)-3-phosphoshikimate = chorismate + phosphate</text>
        <dbReference type="Rhea" id="RHEA:21020"/>
        <dbReference type="ChEBI" id="CHEBI:29748"/>
        <dbReference type="ChEBI" id="CHEBI:43474"/>
        <dbReference type="ChEBI" id="CHEBI:57701"/>
        <dbReference type="EC" id="4.2.3.5"/>
    </reaction>
</comment>
<comment type="cofactor">
    <cofactor evidence="1">
        <name>FMNH2</name>
        <dbReference type="ChEBI" id="CHEBI:57618"/>
    </cofactor>
    <text evidence="1">Reduced FMN (FMNH(2)).</text>
</comment>
<comment type="pathway">
    <text evidence="1">Metabolic intermediate biosynthesis; chorismate biosynthesis; chorismate from D-erythrose 4-phosphate and phosphoenolpyruvate: step 7/7.</text>
</comment>
<comment type="subunit">
    <text evidence="1">Homotetramer.</text>
</comment>
<comment type="similarity">
    <text evidence="1">Belongs to the chorismate synthase family.</text>
</comment>